<reference key="1">
    <citation type="journal article" date="2007" name="J. Bacteriol.">
        <title>Genome sequence analysis of the emerging human pathogenic acetic acid bacterium Granulibacter bethesdensis.</title>
        <authorList>
            <person name="Greenberg D.E."/>
            <person name="Porcella S.F."/>
            <person name="Zelazny A.M."/>
            <person name="Virtaneva K."/>
            <person name="Sturdevant D.E."/>
            <person name="Kupko J.J. III"/>
            <person name="Barbian K.D."/>
            <person name="Babar A."/>
            <person name="Dorward D.W."/>
            <person name="Holland S.M."/>
        </authorList>
    </citation>
    <scope>NUCLEOTIDE SEQUENCE [LARGE SCALE GENOMIC DNA]</scope>
    <source>
        <strain>ATCC BAA-1260 / CGDNIH1</strain>
    </source>
</reference>
<accession>Q0BUX9</accession>
<name>MINE_GRABC</name>
<keyword id="KW-0131">Cell cycle</keyword>
<keyword id="KW-0132">Cell division</keyword>
<keyword id="KW-1185">Reference proteome</keyword>
<dbReference type="EMBL" id="CP000394">
    <property type="protein sequence ID" value="ABI61373.1"/>
    <property type="molecule type" value="Genomic_DNA"/>
</dbReference>
<dbReference type="RefSeq" id="WP_011631183.1">
    <property type="nucleotide sequence ID" value="NC_008343.2"/>
</dbReference>
<dbReference type="SMR" id="Q0BUX9"/>
<dbReference type="STRING" id="391165.GbCGDNIH1_0475"/>
<dbReference type="KEGG" id="gbe:GbCGDNIH1_0475"/>
<dbReference type="eggNOG" id="COG0851">
    <property type="taxonomic scope" value="Bacteria"/>
</dbReference>
<dbReference type="HOGENOM" id="CLU_137929_2_0_5"/>
<dbReference type="OrthoDB" id="9802655at2"/>
<dbReference type="Proteomes" id="UP000001963">
    <property type="component" value="Chromosome"/>
</dbReference>
<dbReference type="GO" id="GO:0051301">
    <property type="term" value="P:cell division"/>
    <property type="evidence" value="ECO:0007669"/>
    <property type="project" value="UniProtKB-KW"/>
</dbReference>
<dbReference type="GO" id="GO:0032955">
    <property type="term" value="P:regulation of division septum assembly"/>
    <property type="evidence" value="ECO:0007669"/>
    <property type="project" value="InterPro"/>
</dbReference>
<dbReference type="Gene3D" id="3.30.1070.10">
    <property type="entry name" value="Cell division topological specificity factor MinE"/>
    <property type="match status" value="1"/>
</dbReference>
<dbReference type="HAMAP" id="MF_00262">
    <property type="entry name" value="MinE"/>
    <property type="match status" value="1"/>
</dbReference>
<dbReference type="InterPro" id="IPR005527">
    <property type="entry name" value="MinE"/>
</dbReference>
<dbReference type="InterPro" id="IPR036707">
    <property type="entry name" value="MinE_sf"/>
</dbReference>
<dbReference type="NCBIfam" id="TIGR01215">
    <property type="entry name" value="minE"/>
    <property type="match status" value="1"/>
</dbReference>
<dbReference type="NCBIfam" id="NF001422">
    <property type="entry name" value="PRK00296.1"/>
    <property type="match status" value="1"/>
</dbReference>
<dbReference type="Pfam" id="PF03776">
    <property type="entry name" value="MinE"/>
    <property type="match status" value="1"/>
</dbReference>
<dbReference type="SUPFAM" id="SSF55229">
    <property type="entry name" value="Cell division protein MinE topological specificity domain"/>
    <property type="match status" value="1"/>
</dbReference>
<feature type="chain" id="PRO_0000298123" description="Cell division topological specificity factor">
    <location>
        <begin position="1"/>
        <end position="84"/>
    </location>
</feature>
<gene>
    <name evidence="1" type="primary">minE</name>
    <name type="ordered locus">GbCGDNIH1_0475</name>
</gene>
<protein>
    <recommendedName>
        <fullName evidence="1">Cell division topological specificity factor</fullName>
    </recommendedName>
</protein>
<comment type="function">
    <text evidence="1">Prevents the cell division inhibition by proteins MinC and MinD at internal division sites while permitting inhibition at polar sites. This ensures cell division at the proper site by restricting the formation of a division septum at the midpoint of the long axis of the cell.</text>
</comment>
<comment type="similarity">
    <text evidence="1">Belongs to the MinE family.</text>
</comment>
<evidence type="ECO:0000255" key="1">
    <source>
        <dbReference type="HAMAP-Rule" id="MF_00262"/>
    </source>
</evidence>
<proteinExistence type="inferred from homology"/>
<sequence length="84" mass="9351">MSLFGFLQRKPTAQVARNRLQILLAHERGLEGNADLAAILQEEIIAVIAKHVEIDREKVQVKLDRGSAFSTLEIDVEMPNGKKA</sequence>
<organism>
    <name type="scientific">Granulibacter bethesdensis (strain ATCC BAA-1260 / CGDNIH1)</name>
    <dbReference type="NCBI Taxonomy" id="391165"/>
    <lineage>
        <taxon>Bacteria</taxon>
        <taxon>Pseudomonadati</taxon>
        <taxon>Pseudomonadota</taxon>
        <taxon>Alphaproteobacteria</taxon>
        <taxon>Acetobacterales</taxon>
        <taxon>Acetobacteraceae</taxon>
        <taxon>Granulibacter</taxon>
    </lineage>
</organism>